<name>CHLB_PINKO</name>
<comment type="function">
    <text evidence="1">Component of the dark-operative protochlorophyllide reductase (DPOR) that uses Mg-ATP and reduced ferredoxin to reduce ring D of protochlorophyllide (Pchlide) to form chlorophyllide a (Chlide). This reaction is light-independent. The NB-protein (ChlN-ChlB) is the catalytic component of the complex.</text>
</comment>
<comment type="catalytic activity">
    <reaction evidence="1">
        <text>chlorophyllide a + oxidized 2[4Fe-4S]-[ferredoxin] + 2 ADP + 2 phosphate = protochlorophyllide a + reduced 2[4Fe-4S]-[ferredoxin] + 2 ATP + 2 H2O</text>
        <dbReference type="Rhea" id="RHEA:28202"/>
        <dbReference type="Rhea" id="RHEA-COMP:10002"/>
        <dbReference type="Rhea" id="RHEA-COMP:10004"/>
        <dbReference type="ChEBI" id="CHEBI:15377"/>
        <dbReference type="ChEBI" id="CHEBI:30616"/>
        <dbReference type="ChEBI" id="CHEBI:33722"/>
        <dbReference type="ChEBI" id="CHEBI:33723"/>
        <dbReference type="ChEBI" id="CHEBI:43474"/>
        <dbReference type="ChEBI" id="CHEBI:83348"/>
        <dbReference type="ChEBI" id="CHEBI:83350"/>
        <dbReference type="ChEBI" id="CHEBI:456216"/>
        <dbReference type="EC" id="1.3.7.7"/>
    </reaction>
</comment>
<comment type="cofactor">
    <cofactor evidence="1">
        <name>[4Fe-4S] cluster</name>
        <dbReference type="ChEBI" id="CHEBI:49883"/>
    </cofactor>
    <text evidence="1">Binds 1 [4Fe-4S] cluster per heterodimer. The cluster is bound at the heterodimer interface by residues from both subunits.</text>
</comment>
<comment type="pathway">
    <text evidence="1">Porphyrin-containing compound metabolism; chlorophyll biosynthesis (light-independent).</text>
</comment>
<comment type="subunit">
    <text evidence="1">Protochlorophyllide reductase is composed of three subunits; ChlL, ChlN and ChlB. Forms a heterotetramer of two ChlB and two ChlN subunits.</text>
</comment>
<comment type="subcellular location">
    <subcellularLocation>
        <location>Plastid</location>
        <location>Chloroplast</location>
    </subcellularLocation>
</comment>
<comment type="similarity">
    <text evidence="1">Belongs to the ChlB/BchB/BchZ family.</text>
</comment>
<gene>
    <name evidence="1" type="primary">chlB</name>
</gene>
<evidence type="ECO:0000255" key="1">
    <source>
        <dbReference type="HAMAP-Rule" id="MF_00353"/>
    </source>
</evidence>
<accession>Q85X76</accession>
<protein>
    <recommendedName>
        <fullName evidence="1">Light-independent protochlorophyllide reductase subunit B</fullName>
        <shortName evidence="1">DPOR subunit B</shortName>
        <shortName evidence="1">LI-POR subunit B</shortName>
        <ecNumber evidence="1">1.3.7.7</ecNumber>
    </recommendedName>
</protein>
<dbReference type="EC" id="1.3.7.7" evidence="1"/>
<dbReference type="EMBL" id="AY228468">
    <property type="protein sequence ID" value="AAO73986.1"/>
    <property type="molecule type" value="Genomic_DNA"/>
</dbReference>
<dbReference type="RefSeq" id="NP_817136.1">
    <property type="nucleotide sequence ID" value="NC_004677.2"/>
</dbReference>
<dbReference type="SMR" id="Q85X76"/>
<dbReference type="GeneID" id="806903"/>
<dbReference type="UniPathway" id="UPA00670"/>
<dbReference type="GO" id="GO:0009507">
    <property type="term" value="C:chloroplast"/>
    <property type="evidence" value="ECO:0007669"/>
    <property type="project" value="UniProtKB-SubCell"/>
</dbReference>
<dbReference type="GO" id="GO:0051539">
    <property type="term" value="F:4 iron, 4 sulfur cluster binding"/>
    <property type="evidence" value="ECO:0007669"/>
    <property type="project" value="UniProtKB-UniRule"/>
</dbReference>
<dbReference type="GO" id="GO:0005524">
    <property type="term" value="F:ATP binding"/>
    <property type="evidence" value="ECO:0007669"/>
    <property type="project" value="UniProtKB-UniRule"/>
</dbReference>
<dbReference type="GO" id="GO:0046872">
    <property type="term" value="F:metal ion binding"/>
    <property type="evidence" value="ECO:0007669"/>
    <property type="project" value="UniProtKB-KW"/>
</dbReference>
<dbReference type="GO" id="GO:0016730">
    <property type="term" value="F:oxidoreductase activity, acting on iron-sulfur proteins as donors"/>
    <property type="evidence" value="ECO:0007669"/>
    <property type="project" value="InterPro"/>
</dbReference>
<dbReference type="GO" id="GO:0016636">
    <property type="term" value="F:oxidoreductase activity, acting on the CH-CH group of donors, iron-sulfur protein as acceptor"/>
    <property type="evidence" value="ECO:0007669"/>
    <property type="project" value="UniProtKB-UniRule"/>
</dbReference>
<dbReference type="GO" id="GO:0036068">
    <property type="term" value="P:light-independent chlorophyll biosynthetic process"/>
    <property type="evidence" value="ECO:0007669"/>
    <property type="project" value="UniProtKB-UniRule"/>
</dbReference>
<dbReference type="GO" id="GO:0019685">
    <property type="term" value="P:photosynthesis, dark reaction"/>
    <property type="evidence" value="ECO:0007669"/>
    <property type="project" value="InterPro"/>
</dbReference>
<dbReference type="CDD" id="cd01981">
    <property type="entry name" value="Pchlide_reductase_B"/>
    <property type="match status" value="1"/>
</dbReference>
<dbReference type="Gene3D" id="1.20.89.20">
    <property type="match status" value="1"/>
</dbReference>
<dbReference type="Gene3D" id="3.40.50.1980">
    <property type="entry name" value="Nitrogenase molybdenum iron protein domain"/>
    <property type="match status" value="3"/>
</dbReference>
<dbReference type="Gene3D" id="1.10.8.550">
    <property type="entry name" value="Proto-chlorophyllide reductase 57 kD subunit B"/>
    <property type="match status" value="1"/>
</dbReference>
<dbReference type="HAMAP" id="MF_00353">
    <property type="entry name" value="ChlB_BchB"/>
    <property type="match status" value="1"/>
</dbReference>
<dbReference type="InterPro" id="IPR050152">
    <property type="entry name" value="ChlB/BchB/BchZ"/>
</dbReference>
<dbReference type="InterPro" id="IPR013580">
    <property type="entry name" value="LI-POR_suB-like_C"/>
</dbReference>
<dbReference type="InterPro" id="IPR000510">
    <property type="entry name" value="Nase/OxRdtase_comp1"/>
</dbReference>
<dbReference type="InterPro" id="IPR042298">
    <property type="entry name" value="P-CP_red_C"/>
</dbReference>
<dbReference type="InterPro" id="IPR005969">
    <property type="entry name" value="Protochl_reductB"/>
</dbReference>
<dbReference type="InterPro" id="IPR016209">
    <property type="entry name" value="Protochlorophyllide_Rdtase"/>
</dbReference>
<dbReference type="NCBIfam" id="TIGR01278">
    <property type="entry name" value="DPOR_BchB"/>
    <property type="match status" value="1"/>
</dbReference>
<dbReference type="PANTHER" id="PTHR33712">
    <property type="entry name" value="LIGHT-INDEPENDENT PROTOCHLOROPHYLLIDE REDUCTASE SUBUNIT B"/>
    <property type="match status" value="1"/>
</dbReference>
<dbReference type="PANTHER" id="PTHR33712:SF7">
    <property type="entry name" value="LIGHT-INDEPENDENT PROTOCHLOROPHYLLIDE REDUCTASE SUBUNIT B"/>
    <property type="match status" value="1"/>
</dbReference>
<dbReference type="Pfam" id="PF00148">
    <property type="entry name" value="Oxidored_nitro"/>
    <property type="match status" value="1"/>
</dbReference>
<dbReference type="Pfam" id="PF08369">
    <property type="entry name" value="PCP_red"/>
    <property type="match status" value="1"/>
</dbReference>
<dbReference type="PIRSF" id="PIRSF000163">
    <property type="entry name" value="PCP_ChlB"/>
    <property type="match status" value="1"/>
</dbReference>
<dbReference type="SUPFAM" id="SSF53807">
    <property type="entry name" value="Helical backbone' metal receptor"/>
    <property type="match status" value="1"/>
</dbReference>
<geneLocation type="chloroplast"/>
<feature type="chain" id="PRO_0000219837" description="Light-independent protochlorophyllide reductase subunit B">
    <location>
        <begin position="1"/>
        <end position="510"/>
    </location>
</feature>
<feature type="active site" description="Proton donor" evidence="1">
    <location>
        <position position="297"/>
    </location>
</feature>
<feature type="binding site" evidence="1">
    <location>
        <position position="36"/>
    </location>
    <ligand>
        <name>[4Fe-4S] cluster</name>
        <dbReference type="ChEBI" id="CHEBI:49883"/>
        <note>ligand shared with heterodimeric partner</note>
    </ligand>
</feature>
<feature type="binding site" evidence="1">
    <location>
        <begin position="432"/>
        <end position="433"/>
    </location>
    <ligand>
        <name>substrate</name>
    </ligand>
</feature>
<organism>
    <name type="scientific">Pinus koraiensis</name>
    <name type="common">Korean pine</name>
    <dbReference type="NCBI Taxonomy" id="88728"/>
    <lineage>
        <taxon>Eukaryota</taxon>
        <taxon>Viridiplantae</taxon>
        <taxon>Streptophyta</taxon>
        <taxon>Embryophyta</taxon>
        <taxon>Tracheophyta</taxon>
        <taxon>Spermatophyta</taxon>
        <taxon>Pinopsida</taxon>
        <taxon>Pinidae</taxon>
        <taxon>Conifers I</taxon>
        <taxon>Pinales</taxon>
        <taxon>Pinaceae</taxon>
        <taxon>Pinus</taxon>
        <taxon>Pinus subgen. Strobus</taxon>
    </lineage>
</organism>
<sequence length="510" mass="57677">MKLAHWMYAGPAHIGTLRVASSFKNVHAIMHAPLGDDYFNVMRSMLERERNFTPATASIVDRHVLARGSRKRVVDNILRKDKEESPDLIILTPTCTSSILQEDLKNFVDRASIISDCNVIFADVDHYQVNEIQAADRTLEQVVRYYLDKSHTLDQFVTDAPSVNIIGILTLGFHNRHDCRELRRLLKDLDIRINQIIPEGGSVEDPKNLPKARFNLIPYREVGLMTAMYLNKEFGMPYVSTTPMGAVDMAECIRQIKKSLDILAAPILSSKRVDYESYIDGQTRFVSQAAWFSRSIDCQNFTGKETVVFGDATHAASITKILAREMGIRVSCTGTYCKHDAEWFKEQIKDFCDEMIITDDHAEVGDIIARVEPSAIFGTQMERHIGKRLEIPCGVISAPAHIQNFSLGYRPFLGYEGTNQIADLVYNSFALGMEDHLLEIFCGHDTKEIMTKSLSTDISPIWDPESRQELGKIPRFVRDEVKINTEKFARQKGLLNVTVEVMHAAKEALS</sequence>
<proteinExistence type="inferred from homology"/>
<reference key="1">
    <citation type="submission" date="2003-02" db="EMBL/GenBank/DDBJ databases">
        <title>Complete nucleotide sequence of Pinus koraiensis.</title>
        <authorList>
            <person name="Noh E.W."/>
            <person name="Lee J.S."/>
            <person name="Choi Y.I."/>
            <person name="Han M.S."/>
            <person name="Yi Y.S."/>
            <person name="Han S.U."/>
        </authorList>
    </citation>
    <scope>NUCLEOTIDE SEQUENCE [LARGE SCALE GENOMIC DNA]</scope>
    <source>
        <strain>KangWon16</strain>
    </source>
</reference>
<keyword id="KW-0004">4Fe-4S</keyword>
<keyword id="KW-0067">ATP-binding</keyword>
<keyword id="KW-0149">Chlorophyll biosynthesis</keyword>
<keyword id="KW-0150">Chloroplast</keyword>
<keyword id="KW-0408">Iron</keyword>
<keyword id="KW-0411">Iron-sulfur</keyword>
<keyword id="KW-0479">Metal-binding</keyword>
<keyword id="KW-0547">Nucleotide-binding</keyword>
<keyword id="KW-0560">Oxidoreductase</keyword>
<keyword id="KW-0602">Photosynthesis</keyword>
<keyword id="KW-0934">Plastid</keyword>